<evidence type="ECO:0000255" key="1">
    <source>
        <dbReference type="HAMAP-Rule" id="MF_00274"/>
    </source>
</evidence>
<protein>
    <recommendedName>
        <fullName evidence="1">Nucleoid-associated protein CBUD_0666</fullName>
    </recommendedName>
</protein>
<gene>
    <name type="ordered locus">CBUD_0666</name>
</gene>
<proteinExistence type="inferred from homology"/>
<organism>
    <name type="scientific">Coxiella burnetii (strain Dugway 5J108-111)</name>
    <dbReference type="NCBI Taxonomy" id="434922"/>
    <lineage>
        <taxon>Bacteria</taxon>
        <taxon>Pseudomonadati</taxon>
        <taxon>Pseudomonadota</taxon>
        <taxon>Gammaproteobacteria</taxon>
        <taxon>Legionellales</taxon>
        <taxon>Coxiellaceae</taxon>
        <taxon>Coxiella</taxon>
    </lineage>
</organism>
<reference key="1">
    <citation type="journal article" date="2009" name="Infect. Immun.">
        <title>Comparative genomics reveal extensive transposon-mediated genomic plasticity and diversity among potential effector proteins within the genus Coxiella.</title>
        <authorList>
            <person name="Beare P.A."/>
            <person name="Unsworth N."/>
            <person name="Andoh M."/>
            <person name="Voth D.E."/>
            <person name="Omsland A."/>
            <person name="Gilk S.D."/>
            <person name="Williams K.P."/>
            <person name="Sobral B.W."/>
            <person name="Kupko J.J. III"/>
            <person name="Porcella S.F."/>
            <person name="Samuel J.E."/>
            <person name="Heinzen R.A."/>
        </authorList>
    </citation>
    <scope>NUCLEOTIDE SEQUENCE [LARGE SCALE GENOMIC DNA]</scope>
    <source>
        <strain>Dugway 5J108-111</strain>
    </source>
</reference>
<dbReference type="EMBL" id="CP000733">
    <property type="protein sequence ID" value="ABS77589.1"/>
    <property type="molecule type" value="Genomic_DNA"/>
</dbReference>
<dbReference type="RefSeq" id="WP_005771886.1">
    <property type="nucleotide sequence ID" value="NC_009727.1"/>
</dbReference>
<dbReference type="SMR" id="A9KC74"/>
<dbReference type="KEGG" id="cbd:CBUD_0666"/>
<dbReference type="HOGENOM" id="CLU_140930_0_0_6"/>
<dbReference type="Proteomes" id="UP000008555">
    <property type="component" value="Chromosome"/>
</dbReference>
<dbReference type="GO" id="GO:0043590">
    <property type="term" value="C:bacterial nucleoid"/>
    <property type="evidence" value="ECO:0007669"/>
    <property type="project" value="UniProtKB-UniRule"/>
</dbReference>
<dbReference type="GO" id="GO:0005829">
    <property type="term" value="C:cytosol"/>
    <property type="evidence" value="ECO:0007669"/>
    <property type="project" value="TreeGrafter"/>
</dbReference>
<dbReference type="GO" id="GO:0003677">
    <property type="term" value="F:DNA binding"/>
    <property type="evidence" value="ECO:0007669"/>
    <property type="project" value="UniProtKB-UniRule"/>
</dbReference>
<dbReference type="Gene3D" id="3.30.1310.10">
    <property type="entry name" value="Nucleoid-associated protein YbaB-like domain"/>
    <property type="match status" value="1"/>
</dbReference>
<dbReference type="HAMAP" id="MF_00274">
    <property type="entry name" value="DNA_YbaB_EbfC"/>
    <property type="match status" value="1"/>
</dbReference>
<dbReference type="InterPro" id="IPR036894">
    <property type="entry name" value="YbaB-like_sf"/>
</dbReference>
<dbReference type="InterPro" id="IPR004401">
    <property type="entry name" value="YbaB/EbfC"/>
</dbReference>
<dbReference type="NCBIfam" id="TIGR00103">
    <property type="entry name" value="DNA_YbaB_EbfC"/>
    <property type="match status" value="1"/>
</dbReference>
<dbReference type="PANTHER" id="PTHR33449">
    <property type="entry name" value="NUCLEOID-ASSOCIATED PROTEIN YBAB"/>
    <property type="match status" value="1"/>
</dbReference>
<dbReference type="PANTHER" id="PTHR33449:SF1">
    <property type="entry name" value="NUCLEOID-ASSOCIATED PROTEIN YBAB"/>
    <property type="match status" value="1"/>
</dbReference>
<dbReference type="Pfam" id="PF02575">
    <property type="entry name" value="YbaB_DNA_bd"/>
    <property type="match status" value="1"/>
</dbReference>
<dbReference type="PIRSF" id="PIRSF004555">
    <property type="entry name" value="UCP004555"/>
    <property type="match status" value="1"/>
</dbReference>
<dbReference type="SUPFAM" id="SSF82607">
    <property type="entry name" value="YbaB-like"/>
    <property type="match status" value="1"/>
</dbReference>
<keyword id="KW-0963">Cytoplasm</keyword>
<keyword id="KW-0238">DNA-binding</keyword>
<feature type="chain" id="PRO_1000078754" description="Nucleoid-associated protein CBUD_0666">
    <location>
        <begin position="1"/>
        <end position="110"/>
    </location>
</feature>
<sequence>MIGGKFNLGSLMKNAKKIQEMMQKAQDELAKIRVTGESGAGMVKLTMTAQHEVVEMNLDDELLKESKEVIEDLIKAALNDANQKILKITQEKMMSAGSLFGGNESDNEET</sequence>
<comment type="function">
    <text evidence="1">Binds to DNA and alters its conformation. May be involved in regulation of gene expression, nucleoid organization and DNA protection.</text>
</comment>
<comment type="subunit">
    <text evidence="1">Homodimer.</text>
</comment>
<comment type="subcellular location">
    <subcellularLocation>
        <location evidence="1">Cytoplasm</location>
        <location evidence="1">Nucleoid</location>
    </subcellularLocation>
</comment>
<comment type="similarity">
    <text evidence="1">Belongs to the YbaB/EbfC family.</text>
</comment>
<accession>A9KC74</accession>
<name>Y666_COXBN</name>